<sequence>MSNKKRSASSSRWLQEHFSDKYVIQAQKKGLRSRAWFKLDEIQQSDKLFKQGMTVVDLGAAPGGWSQYAVTQIGSKGRVIACDLLPMDPIVGVDFLQGDFRDELVLKALLERVGDKKVQVVMCDMAPNMSGTPAVDIPKSMYLVELALDMCRDVLAPGGSFLVKVFQGDGFDEYLREIRSLFTKVKIRKPDASRARSREVYIVATGRKL</sequence>
<accession>Q8ZBB5</accession>
<accession>Q0WBE6</accession>
<accession>Q74X75</accession>
<accession>Q8D1D5</accession>
<name>RLME_YERPE</name>
<feature type="chain" id="PRO_0000155560" description="Ribosomal RNA large subunit methyltransferase E">
    <location>
        <begin position="1"/>
        <end position="209"/>
    </location>
</feature>
<feature type="active site" description="Proton acceptor" evidence="1">
    <location>
        <position position="164"/>
    </location>
</feature>
<feature type="binding site" evidence="1">
    <location>
        <position position="63"/>
    </location>
    <ligand>
        <name>S-adenosyl-L-methionine</name>
        <dbReference type="ChEBI" id="CHEBI:59789"/>
    </ligand>
</feature>
<feature type="binding site" evidence="1">
    <location>
        <position position="65"/>
    </location>
    <ligand>
        <name>S-adenosyl-L-methionine</name>
        <dbReference type="ChEBI" id="CHEBI:59789"/>
    </ligand>
</feature>
<feature type="binding site" evidence="1">
    <location>
        <position position="83"/>
    </location>
    <ligand>
        <name>S-adenosyl-L-methionine</name>
        <dbReference type="ChEBI" id="CHEBI:59789"/>
    </ligand>
</feature>
<feature type="binding site" evidence="1">
    <location>
        <position position="99"/>
    </location>
    <ligand>
        <name>S-adenosyl-L-methionine</name>
        <dbReference type="ChEBI" id="CHEBI:59789"/>
    </ligand>
</feature>
<feature type="binding site" evidence="1">
    <location>
        <position position="124"/>
    </location>
    <ligand>
        <name>S-adenosyl-L-methionine</name>
        <dbReference type="ChEBI" id="CHEBI:59789"/>
    </ligand>
</feature>
<comment type="function">
    <text evidence="1">Specifically methylates the uridine in position 2552 of 23S rRNA at the 2'-O position of the ribose in the fully assembled 50S ribosomal subunit.</text>
</comment>
<comment type="catalytic activity">
    <reaction evidence="1">
        <text>uridine(2552) in 23S rRNA + S-adenosyl-L-methionine = 2'-O-methyluridine(2552) in 23S rRNA + S-adenosyl-L-homocysteine + H(+)</text>
        <dbReference type="Rhea" id="RHEA:42720"/>
        <dbReference type="Rhea" id="RHEA-COMP:10202"/>
        <dbReference type="Rhea" id="RHEA-COMP:10203"/>
        <dbReference type="ChEBI" id="CHEBI:15378"/>
        <dbReference type="ChEBI" id="CHEBI:57856"/>
        <dbReference type="ChEBI" id="CHEBI:59789"/>
        <dbReference type="ChEBI" id="CHEBI:65315"/>
        <dbReference type="ChEBI" id="CHEBI:74478"/>
        <dbReference type="EC" id="2.1.1.166"/>
    </reaction>
</comment>
<comment type="subcellular location">
    <subcellularLocation>
        <location evidence="1">Cytoplasm</location>
    </subcellularLocation>
</comment>
<comment type="similarity">
    <text evidence="1">Belongs to the class I-like SAM-binding methyltransferase superfamily. RNA methyltransferase RlmE family.</text>
</comment>
<comment type="sequence caution" evidence="2">
    <conflict type="erroneous initiation">
        <sequence resource="EMBL-CDS" id="AAM84269"/>
    </conflict>
</comment>
<comment type="sequence caution" evidence="2">
    <conflict type="erroneous initiation">
        <sequence resource="EMBL-CDS" id="AAS60850"/>
    </conflict>
</comment>
<keyword id="KW-0963">Cytoplasm</keyword>
<keyword id="KW-0489">Methyltransferase</keyword>
<keyword id="KW-1185">Reference proteome</keyword>
<keyword id="KW-0698">rRNA processing</keyword>
<keyword id="KW-0949">S-adenosyl-L-methionine</keyword>
<keyword id="KW-0808">Transferase</keyword>
<organism>
    <name type="scientific">Yersinia pestis</name>
    <dbReference type="NCBI Taxonomy" id="632"/>
    <lineage>
        <taxon>Bacteria</taxon>
        <taxon>Pseudomonadati</taxon>
        <taxon>Pseudomonadota</taxon>
        <taxon>Gammaproteobacteria</taxon>
        <taxon>Enterobacterales</taxon>
        <taxon>Yersiniaceae</taxon>
        <taxon>Yersinia</taxon>
    </lineage>
</organism>
<protein>
    <recommendedName>
        <fullName evidence="1">Ribosomal RNA large subunit methyltransferase E</fullName>
        <ecNumber evidence="1">2.1.1.166</ecNumber>
    </recommendedName>
    <alternativeName>
        <fullName evidence="1">23S rRNA Um2552 methyltransferase</fullName>
    </alternativeName>
    <alternativeName>
        <fullName evidence="1">rRNA (uridine-2'-O-)-methyltransferase</fullName>
    </alternativeName>
</protein>
<dbReference type="EC" id="2.1.1.166" evidence="1"/>
<dbReference type="EMBL" id="AL590842">
    <property type="protein sequence ID" value="CAL22091.1"/>
    <property type="molecule type" value="Genomic_DNA"/>
</dbReference>
<dbReference type="EMBL" id="AE009952">
    <property type="protein sequence ID" value="AAM84269.1"/>
    <property type="status" value="ALT_INIT"/>
    <property type="molecule type" value="Genomic_DNA"/>
</dbReference>
<dbReference type="EMBL" id="AE017042">
    <property type="protein sequence ID" value="AAS60850.1"/>
    <property type="status" value="ALT_INIT"/>
    <property type="molecule type" value="Genomic_DNA"/>
</dbReference>
<dbReference type="PIR" id="AH0425">
    <property type="entry name" value="AH0425"/>
</dbReference>
<dbReference type="RefSeq" id="WP_002228196.1">
    <property type="nucleotide sequence ID" value="NZ_WUCM01000036.1"/>
</dbReference>
<dbReference type="RefSeq" id="YP_002348392.1">
    <property type="nucleotide sequence ID" value="NC_003143.1"/>
</dbReference>
<dbReference type="SMR" id="Q8ZBB5"/>
<dbReference type="STRING" id="214092.YPO3503"/>
<dbReference type="PaxDb" id="214092-YPO3503"/>
<dbReference type="EnsemblBacteria" id="AAS60850">
    <property type="protein sequence ID" value="AAS60850"/>
    <property type="gene ID" value="YP_0580"/>
</dbReference>
<dbReference type="GeneID" id="57975211"/>
<dbReference type="KEGG" id="ype:YPO3503"/>
<dbReference type="KEGG" id="ypk:y0681"/>
<dbReference type="KEGG" id="ypm:YP_0580"/>
<dbReference type="PATRIC" id="fig|214092.21.peg.3997"/>
<dbReference type="eggNOG" id="COG0293">
    <property type="taxonomic scope" value="Bacteria"/>
</dbReference>
<dbReference type="HOGENOM" id="CLU_009422_4_0_6"/>
<dbReference type="OrthoDB" id="9790080at2"/>
<dbReference type="Proteomes" id="UP000000815">
    <property type="component" value="Chromosome"/>
</dbReference>
<dbReference type="Proteomes" id="UP000001019">
    <property type="component" value="Chromosome"/>
</dbReference>
<dbReference type="Proteomes" id="UP000002490">
    <property type="component" value="Chromosome"/>
</dbReference>
<dbReference type="GO" id="GO:0005737">
    <property type="term" value="C:cytoplasm"/>
    <property type="evidence" value="ECO:0007669"/>
    <property type="project" value="UniProtKB-SubCell"/>
</dbReference>
<dbReference type="GO" id="GO:0008650">
    <property type="term" value="F:rRNA (uridine-2'-O-)-methyltransferase activity"/>
    <property type="evidence" value="ECO:0000318"/>
    <property type="project" value="GO_Central"/>
</dbReference>
<dbReference type="GO" id="GO:0001510">
    <property type="term" value="P:RNA methylation"/>
    <property type="evidence" value="ECO:0000318"/>
    <property type="project" value="GO_Central"/>
</dbReference>
<dbReference type="FunFam" id="3.40.50.150:FF:000005">
    <property type="entry name" value="Ribosomal RNA large subunit methyltransferase E"/>
    <property type="match status" value="1"/>
</dbReference>
<dbReference type="Gene3D" id="3.40.50.150">
    <property type="entry name" value="Vaccinia Virus protein VP39"/>
    <property type="match status" value="1"/>
</dbReference>
<dbReference type="HAMAP" id="MF_01547">
    <property type="entry name" value="RNA_methyltr_E"/>
    <property type="match status" value="1"/>
</dbReference>
<dbReference type="InterPro" id="IPR050082">
    <property type="entry name" value="RNA_methyltr_RlmE"/>
</dbReference>
<dbReference type="InterPro" id="IPR002877">
    <property type="entry name" value="RNA_MeTrfase_FtsJ_dom"/>
</dbReference>
<dbReference type="InterPro" id="IPR015507">
    <property type="entry name" value="rRNA-MeTfrase_E"/>
</dbReference>
<dbReference type="InterPro" id="IPR004512">
    <property type="entry name" value="rRNA_MeTrfase_gammaproteobac"/>
</dbReference>
<dbReference type="InterPro" id="IPR029063">
    <property type="entry name" value="SAM-dependent_MTases_sf"/>
</dbReference>
<dbReference type="NCBIfam" id="NF008390">
    <property type="entry name" value="PRK11188.1"/>
    <property type="match status" value="1"/>
</dbReference>
<dbReference type="NCBIfam" id="TIGR00438">
    <property type="entry name" value="rrmJ"/>
    <property type="match status" value="1"/>
</dbReference>
<dbReference type="PANTHER" id="PTHR10920">
    <property type="entry name" value="RIBOSOMAL RNA METHYLTRANSFERASE"/>
    <property type="match status" value="1"/>
</dbReference>
<dbReference type="PANTHER" id="PTHR10920:SF18">
    <property type="entry name" value="RRNA METHYLTRANSFERASE 2, MITOCHONDRIAL"/>
    <property type="match status" value="1"/>
</dbReference>
<dbReference type="Pfam" id="PF01728">
    <property type="entry name" value="FtsJ"/>
    <property type="match status" value="1"/>
</dbReference>
<dbReference type="PIRSF" id="PIRSF005461">
    <property type="entry name" value="23S_rRNA_mtase"/>
    <property type="match status" value="1"/>
</dbReference>
<dbReference type="SUPFAM" id="SSF53335">
    <property type="entry name" value="S-adenosyl-L-methionine-dependent methyltransferases"/>
    <property type="match status" value="1"/>
</dbReference>
<gene>
    <name evidence="1" type="primary">rlmE</name>
    <name evidence="1" type="synonym">ftsJ</name>
    <name evidence="1" type="synonym">rrmJ</name>
    <name type="ordered locus">YPO3503</name>
    <name type="ordered locus">y0681</name>
    <name type="ordered locus">YP_0580</name>
</gene>
<reference key="1">
    <citation type="journal article" date="2001" name="Nature">
        <title>Genome sequence of Yersinia pestis, the causative agent of plague.</title>
        <authorList>
            <person name="Parkhill J."/>
            <person name="Wren B.W."/>
            <person name="Thomson N.R."/>
            <person name="Titball R.W."/>
            <person name="Holden M.T.G."/>
            <person name="Prentice M.B."/>
            <person name="Sebaihia M."/>
            <person name="James K.D."/>
            <person name="Churcher C.M."/>
            <person name="Mungall K.L."/>
            <person name="Baker S."/>
            <person name="Basham D."/>
            <person name="Bentley S.D."/>
            <person name="Brooks K."/>
            <person name="Cerdeno-Tarraga A.-M."/>
            <person name="Chillingworth T."/>
            <person name="Cronin A."/>
            <person name="Davies R.M."/>
            <person name="Davis P."/>
            <person name="Dougan G."/>
            <person name="Feltwell T."/>
            <person name="Hamlin N."/>
            <person name="Holroyd S."/>
            <person name="Jagels K."/>
            <person name="Karlyshev A.V."/>
            <person name="Leather S."/>
            <person name="Moule S."/>
            <person name="Oyston P.C.F."/>
            <person name="Quail M.A."/>
            <person name="Rutherford K.M."/>
            <person name="Simmonds M."/>
            <person name="Skelton J."/>
            <person name="Stevens K."/>
            <person name="Whitehead S."/>
            <person name="Barrell B.G."/>
        </authorList>
    </citation>
    <scope>NUCLEOTIDE SEQUENCE [LARGE SCALE GENOMIC DNA]</scope>
    <source>
        <strain>CO-92 / Biovar Orientalis</strain>
    </source>
</reference>
<reference key="2">
    <citation type="journal article" date="2002" name="J. Bacteriol.">
        <title>Genome sequence of Yersinia pestis KIM.</title>
        <authorList>
            <person name="Deng W."/>
            <person name="Burland V."/>
            <person name="Plunkett G. III"/>
            <person name="Boutin A."/>
            <person name="Mayhew G.F."/>
            <person name="Liss P."/>
            <person name="Perna N.T."/>
            <person name="Rose D.J."/>
            <person name="Mau B."/>
            <person name="Zhou S."/>
            <person name="Schwartz D.C."/>
            <person name="Fetherston J.D."/>
            <person name="Lindler L.E."/>
            <person name="Brubaker R.R."/>
            <person name="Plano G.V."/>
            <person name="Straley S.C."/>
            <person name="McDonough K.A."/>
            <person name="Nilles M.L."/>
            <person name="Matson J.S."/>
            <person name="Blattner F.R."/>
            <person name="Perry R.D."/>
        </authorList>
    </citation>
    <scope>NUCLEOTIDE SEQUENCE [LARGE SCALE GENOMIC DNA]</scope>
    <source>
        <strain>KIM10+ / Biovar Mediaevalis</strain>
    </source>
</reference>
<reference key="3">
    <citation type="journal article" date="2004" name="DNA Res.">
        <title>Complete genome sequence of Yersinia pestis strain 91001, an isolate avirulent to humans.</title>
        <authorList>
            <person name="Song Y."/>
            <person name="Tong Z."/>
            <person name="Wang J."/>
            <person name="Wang L."/>
            <person name="Guo Z."/>
            <person name="Han Y."/>
            <person name="Zhang J."/>
            <person name="Pei D."/>
            <person name="Zhou D."/>
            <person name="Qin H."/>
            <person name="Pang X."/>
            <person name="Han Y."/>
            <person name="Zhai J."/>
            <person name="Li M."/>
            <person name="Cui B."/>
            <person name="Qi Z."/>
            <person name="Jin L."/>
            <person name="Dai R."/>
            <person name="Chen F."/>
            <person name="Li S."/>
            <person name="Ye C."/>
            <person name="Du Z."/>
            <person name="Lin W."/>
            <person name="Wang J."/>
            <person name="Yu J."/>
            <person name="Yang H."/>
            <person name="Wang J."/>
            <person name="Huang P."/>
            <person name="Yang R."/>
        </authorList>
    </citation>
    <scope>NUCLEOTIDE SEQUENCE [LARGE SCALE GENOMIC DNA]</scope>
    <source>
        <strain>91001 / Biovar Mediaevalis</strain>
    </source>
</reference>
<evidence type="ECO:0000255" key="1">
    <source>
        <dbReference type="HAMAP-Rule" id="MF_01547"/>
    </source>
</evidence>
<evidence type="ECO:0000305" key="2"/>
<proteinExistence type="inferred from homology"/>